<sequence length="178" mass="19307">MFDATTILAYKGKNKAVIGGDGQVTFGNTVLKGNATKIRTLYKDQILAGFAGSTADAFNLFDMFEGHLEACKGDLLKSVIAFSKEWRKDKVLRRLEAMMIVLNKEKIFILSGNGDVVEPEDGAIASIGSGGNFAISAARALAKHSSLDEEELVKESLMIAGELCIYTNQNIKILKLED</sequence>
<protein>
    <recommendedName>
        <fullName evidence="1">ATP-dependent protease subunit HslV</fullName>
        <ecNumber evidence="1">3.4.25.2</ecNumber>
    </recommendedName>
</protein>
<proteinExistence type="inferred from homology"/>
<organism>
    <name type="scientific">Aliarcobacter butzleri (strain RM4018)</name>
    <name type="common">Arcobacter butzleri</name>
    <dbReference type="NCBI Taxonomy" id="367737"/>
    <lineage>
        <taxon>Bacteria</taxon>
        <taxon>Pseudomonadati</taxon>
        <taxon>Campylobacterota</taxon>
        <taxon>Epsilonproteobacteria</taxon>
        <taxon>Campylobacterales</taxon>
        <taxon>Arcobacteraceae</taxon>
        <taxon>Aliarcobacter</taxon>
    </lineage>
</organism>
<evidence type="ECO:0000255" key="1">
    <source>
        <dbReference type="HAMAP-Rule" id="MF_00248"/>
    </source>
</evidence>
<feature type="chain" id="PRO_1000059013" description="ATP-dependent protease subunit HslV">
    <location>
        <begin position="1"/>
        <end position="178"/>
    </location>
</feature>
<feature type="active site" evidence="1">
    <location>
        <position position="5"/>
    </location>
</feature>
<feature type="binding site" evidence="1">
    <location>
        <position position="161"/>
    </location>
    <ligand>
        <name>Na(+)</name>
        <dbReference type="ChEBI" id="CHEBI:29101"/>
    </ligand>
</feature>
<feature type="binding site" evidence="1">
    <location>
        <position position="164"/>
    </location>
    <ligand>
        <name>Na(+)</name>
        <dbReference type="ChEBI" id="CHEBI:29101"/>
    </ligand>
</feature>
<feature type="binding site" evidence="1">
    <location>
        <position position="167"/>
    </location>
    <ligand>
        <name>Na(+)</name>
        <dbReference type="ChEBI" id="CHEBI:29101"/>
    </ligand>
</feature>
<comment type="function">
    <text evidence="1">Protease subunit of a proteasome-like degradation complex believed to be a general protein degrading machinery.</text>
</comment>
<comment type="catalytic activity">
    <reaction evidence="1">
        <text>ATP-dependent cleavage of peptide bonds with broad specificity.</text>
        <dbReference type="EC" id="3.4.25.2"/>
    </reaction>
</comment>
<comment type="activity regulation">
    <text evidence="1">Allosterically activated by HslU binding.</text>
</comment>
<comment type="subunit">
    <text evidence="1">A double ring-shaped homohexamer of HslV is capped on each side by a ring-shaped HslU homohexamer. The assembly of the HslU/HslV complex is dependent on binding of ATP.</text>
</comment>
<comment type="subcellular location">
    <subcellularLocation>
        <location evidence="1">Cytoplasm</location>
    </subcellularLocation>
</comment>
<comment type="similarity">
    <text evidence="1">Belongs to the peptidase T1B family. HslV subfamily.</text>
</comment>
<accession>A8ETF7</accession>
<keyword id="KW-0021">Allosteric enzyme</keyword>
<keyword id="KW-0963">Cytoplasm</keyword>
<keyword id="KW-0378">Hydrolase</keyword>
<keyword id="KW-0479">Metal-binding</keyword>
<keyword id="KW-0645">Protease</keyword>
<keyword id="KW-1185">Reference proteome</keyword>
<keyword id="KW-0915">Sodium</keyword>
<keyword id="KW-0346">Stress response</keyword>
<keyword id="KW-0888">Threonine protease</keyword>
<reference key="1">
    <citation type="journal article" date="2007" name="PLoS ONE">
        <title>The complete genome sequence and analysis of the Epsilonproteobacterium Arcobacter butzleri.</title>
        <authorList>
            <person name="Miller W.G."/>
            <person name="Parker C.T."/>
            <person name="Rubenfield M."/>
            <person name="Mendz G.L."/>
            <person name="Woesten M.M.S.M."/>
            <person name="Ussery D.W."/>
            <person name="Stolz J.F."/>
            <person name="Binnewies T.T."/>
            <person name="Hallin P.F."/>
            <person name="Wang G."/>
            <person name="Malek J.A."/>
            <person name="Rogosin A."/>
            <person name="Stanker L.H."/>
            <person name="Mandrell R.E."/>
        </authorList>
    </citation>
    <scope>NUCLEOTIDE SEQUENCE [LARGE SCALE GENOMIC DNA]</scope>
    <source>
        <strain>RM4018</strain>
    </source>
</reference>
<dbReference type="EC" id="3.4.25.2" evidence="1"/>
<dbReference type="EMBL" id="CP000361">
    <property type="protein sequence ID" value="ABV67231.1"/>
    <property type="molecule type" value="Genomic_DNA"/>
</dbReference>
<dbReference type="RefSeq" id="WP_004509157.1">
    <property type="nucleotide sequence ID" value="NC_009850.1"/>
</dbReference>
<dbReference type="SMR" id="A8ETF7"/>
<dbReference type="STRING" id="367737.Abu_0971"/>
<dbReference type="GeneID" id="24304138"/>
<dbReference type="KEGG" id="abu:Abu_0971"/>
<dbReference type="eggNOG" id="COG5405">
    <property type="taxonomic scope" value="Bacteria"/>
</dbReference>
<dbReference type="HOGENOM" id="CLU_093872_1_1_7"/>
<dbReference type="Proteomes" id="UP000001136">
    <property type="component" value="Chromosome"/>
</dbReference>
<dbReference type="GO" id="GO:0009376">
    <property type="term" value="C:HslUV protease complex"/>
    <property type="evidence" value="ECO:0007669"/>
    <property type="project" value="UniProtKB-UniRule"/>
</dbReference>
<dbReference type="GO" id="GO:0005839">
    <property type="term" value="C:proteasome core complex"/>
    <property type="evidence" value="ECO:0007669"/>
    <property type="project" value="InterPro"/>
</dbReference>
<dbReference type="GO" id="GO:0046872">
    <property type="term" value="F:metal ion binding"/>
    <property type="evidence" value="ECO:0007669"/>
    <property type="project" value="UniProtKB-KW"/>
</dbReference>
<dbReference type="GO" id="GO:0004298">
    <property type="term" value="F:threonine-type endopeptidase activity"/>
    <property type="evidence" value="ECO:0007669"/>
    <property type="project" value="UniProtKB-KW"/>
</dbReference>
<dbReference type="GO" id="GO:0051603">
    <property type="term" value="P:proteolysis involved in protein catabolic process"/>
    <property type="evidence" value="ECO:0007669"/>
    <property type="project" value="InterPro"/>
</dbReference>
<dbReference type="CDD" id="cd01913">
    <property type="entry name" value="protease_HslV"/>
    <property type="match status" value="1"/>
</dbReference>
<dbReference type="Gene3D" id="3.60.20.10">
    <property type="entry name" value="Glutamine Phosphoribosylpyrophosphate, subunit 1, domain 1"/>
    <property type="match status" value="1"/>
</dbReference>
<dbReference type="HAMAP" id="MF_00248">
    <property type="entry name" value="HslV"/>
    <property type="match status" value="1"/>
</dbReference>
<dbReference type="InterPro" id="IPR022281">
    <property type="entry name" value="ATP-dep_Prtase_HsIV_su"/>
</dbReference>
<dbReference type="InterPro" id="IPR029055">
    <property type="entry name" value="Ntn_hydrolases_N"/>
</dbReference>
<dbReference type="InterPro" id="IPR001353">
    <property type="entry name" value="Proteasome_sua/b"/>
</dbReference>
<dbReference type="InterPro" id="IPR023333">
    <property type="entry name" value="Proteasome_suB-type"/>
</dbReference>
<dbReference type="NCBIfam" id="TIGR03692">
    <property type="entry name" value="ATP_dep_HslV"/>
    <property type="match status" value="1"/>
</dbReference>
<dbReference type="NCBIfam" id="NF003964">
    <property type="entry name" value="PRK05456.1"/>
    <property type="match status" value="1"/>
</dbReference>
<dbReference type="PANTHER" id="PTHR32194:SF0">
    <property type="entry name" value="ATP-DEPENDENT PROTEASE SUBUNIT HSLV"/>
    <property type="match status" value="1"/>
</dbReference>
<dbReference type="PANTHER" id="PTHR32194">
    <property type="entry name" value="METALLOPROTEASE TLDD"/>
    <property type="match status" value="1"/>
</dbReference>
<dbReference type="Pfam" id="PF00227">
    <property type="entry name" value="Proteasome"/>
    <property type="match status" value="1"/>
</dbReference>
<dbReference type="PIRSF" id="PIRSF039093">
    <property type="entry name" value="HslV"/>
    <property type="match status" value="1"/>
</dbReference>
<dbReference type="SUPFAM" id="SSF56235">
    <property type="entry name" value="N-terminal nucleophile aminohydrolases (Ntn hydrolases)"/>
    <property type="match status" value="1"/>
</dbReference>
<dbReference type="PROSITE" id="PS51476">
    <property type="entry name" value="PROTEASOME_BETA_2"/>
    <property type="match status" value="1"/>
</dbReference>
<gene>
    <name evidence="1" type="primary">hslV</name>
    <name type="ordered locus">Abu_0971</name>
</gene>
<name>HSLV_ALIB4</name>